<organism>
    <name type="scientific">Clostridium perfringens (strain 13 / Type A)</name>
    <dbReference type="NCBI Taxonomy" id="195102"/>
    <lineage>
        <taxon>Bacteria</taxon>
        <taxon>Bacillati</taxon>
        <taxon>Bacillota</taxon>
        <taxon>Clostridia</taxon>
        <taxon>Eubacteriales</taxon>
        <taxon>Clostridiaceae</taxon>
        <taxon>Clostridium</taxon>
    </lineage>
</organism>
<dbReference type="EC" id="3.1.3.71" evidence="1"/>
<dbReference type="EMBL" id="BA000016">
    <property type="protein sequence ID" value="BAB82262.1"/>
    <property type="molecule type" value="Genomic_DNA"/>
</dbReference>
<dbReference type="RefSeq" id="WP_011010963.1">
    <property type="nucleotide sequence ID" value="NC_003366.1"/>
</dbReference>
<dbReference type="SMR" id="Q8XHC9"/>
<dbReference type="STRING" id="195102.gene:10491890"/>
<dbReference type="KEGG" id="cpe:CPE2556"/>
<dbReference type="HOGENOM" id="CLU_070028_0_0_9"/>
<dbReference type="Proteomes" id="UP000000818">
    <property type="component" value="Chromosome"/>
</dbReference>
<dbReference type="GO" id="GO:0050532">
    <property type="term" value="F:2-phosphosulfolactate phosphatase activity"/>
    <property type="evidence" value="ECO:0007669"/>
    <property type="project" value="UniProtKB-UniRule"/>
</dbReference>
<dbReference type="GO" id="GO:0000287">
    <property type="term" value="F:magnesium ion binding"/>
    <property type="evidence" value="ECO:0007669"/>
    <property type="project" value="UniProtKB-UniRule"/>
</dbReference>
<dbReference type="GO" id="GO:0050545">
    <property type="term" value="F:sulfopyruvate decarboxylase activity"/>
    <property type="evidence" value="ECO:0007669"/>
    <property type="project" value="TreeGrafter"/>
</dbReference>
<dbReference type="FunFam" id="3.90.1560.10:FF:000001">
    <property type="entry name" value="Probable 2-phosphosulfolactate phosphatase"/>
    <property type="match status" value="1"/>
</dbReference>
<dbReference type="Gene3D" id="3.90.1560.10">
    <property type="entry name" value="ComB-like"/>
    <property type="match status" value="1"/>
</dbReference>
<dbReference type="HAMAP" id="MF_00490">
    <property type="entry name" value="ComB"/>
    <property type="match status" value="1"/>
</dbReference>
<dbReference type="InterPro" id="IPR005238">
    <property type="entry name" value="ComB-like"/>
</dbReference>
<dbReference type="InterPro" id="IPR036702">
    <property type="entry name" value="ComB-like_sf"/>
</dbReference>
<dbReference type="NCBIfam" id="NF002055">
    <property type="entry name" value="PRK00886.1-4"/>
    <property type="match status" value="1"/>
</dbReference>
<dbReference type="PANTHER" id="PTHR37311">
    <property type="entry name" value="2-PHOSPHOSULFOLACTATE PHOSPHATASE-RELATED"/>
    <property type="match status" value="1"/>
</dbReference>
<dbReference type="PANTHER" id="PTHR37311:SF1">
    <property type="entry name" value="2-PHOSPHOSULFOLACTATE PHOSPHATASE-RELATED"/>
    <property type="match status" value="1"/>
</dbReference>
<dbReference type="Pfam" id="PF04029">
    <property type="entry name" value="2-ph_phosp"/>
    <property type="match status" value="1"/>
</dbReference>
<dbReference type="SUPFAM" id="SSF142823">
    <property type="entry name" value="ComB-like"/>
    <property type="match status" value="1"/>
</dbReference>
<comment type="catalytic activity">
    <reaction evidence="1">
        <text>(2R)-O-phospho-3-sulfolactate + H2O = (2R)-3-sulfolactate + phosphate</text>
        <dbReference type="Rhea" id="RHEA:23416"/>
        <dbReference type="ChEBI" id="CHEBI:15377"/>
        <dbReference type="ChEBI" id="CHEBI:15597"/>
        <dbReference type="ChEBI" id="CHEBI:43474"/>
        <dbReference type="ChEBI" id="CHEBI:58738"/>
        <dbReference type="EC" id="3.1.3.71"/>
    </reaction>
</comment>
<comment type="cofactor">
    <cofactor evidence="1">
        <name>Mg(2+)</name>
        <dbReference type="ChEBI" id="CHEBI:18420"/>
    </cofactor>
</comment>
<comment type="similarity">
    <text evidence="1">Belongs to the ComB family.</text>
</comment>
<accession>Q8XHC9</accession>
<protein>
    <recommendedName>
        <fullName evidence="1">Probable 2-phosphosulfolactate phosphatase</fullName>
        <ecNumber evidence="1">3.1.3.71</ecNumber>
    </recommendedName>
</protein>
<gene>
    <name evidence="1" type="primary">comB</name>
    <name type="ordered locus">CPE2556</name>
</gene>
<sequence length="247" mass="27190">MKIDVIISADYIDSESLKGKIAVVIDMLRATSVITTALYNGAKKVIPVVSVEEAFEKANELKSLGEEVLLGGERKALKIDGFDFSNSPLEYKREIVEGKNVIMSTTNGTRALNLCNKADKVIVASVLNGQAVAKYLENEEKEIVFVNSGTNGEFSSDDFMCAGYIISEICKNKEAELTDIAKTAKYVCESSEGIEEFIKDAKHYNILKNLGLEEDLKYCSTKNLIDLVFEFKNGEIKTVESGVKVTI</sequence>
<feature type="chain" id="PRO_0000081466" description="Probable 2-phosphosulfolactate phosphatase">
    <location>
        <begin position="1"/>
        <end position="247"/>
    </location>
</feature>
<evidence type="ECO:0000255" key="1">
    <source>
        <dbReference type="HAMAP-Rule" id="MF_00490"/>
    </source>
</evidence>
<keyword id="KW-0378">Hydrolase</keyword>
<keyword id="KW-0460">Magnesium</keyword>
<keyword id="KW-1185">Reference proteome</keyword>
<name>COMB_CLOPE</name>
<reference key="1">
    <citation type="journal article" date="2002" name="Proc. Natl. Acad. Sci. U.S.A.">
        <title>Complete genome sequence of Clostridium perfringens, an anaerobic flesh-eater.</title>
        <authorList>
            <person name="Shimizu T."/>
            <person name="Ohtani K."/>
            <person name="Hirakawa H."/>
            <person name="Ohshima K."/>
            <person name="Yamashita A."/>
            <person name="Shiba T."/>
            <person name="Ogasawara N."/>
            <person name="Hattori M."/>
            <person name="Kuhara S."/>
            <person name="Hayashi H."/>
        </authorList>
    </citation>
    <scope>NUCLEOTIDE SEQUENCE [LARGE SCALE GENOMIC DNA]</scope>
    <source>
        <strain>13 / Type A</strain>
    </source>
</reference>
<proteinExistence type="inferred from homology"/>